<evidence type="ECO:0000255" key="1">
    <source>
        <dbReference type="PROSITE-ProRule" id="PRU00798"/>
    </source>
</evidence>
<comment type="subcellular location">
    <subcellularLocation>
        <location>Secreted</location>
    </subcellularLocation>
</comment>
<comment type="domain">
    <text>Avian ovomucoid consists of three homologous, tandem Kazal family inhibitory domains.</text>
</comment>
<feature type="chain" id="PRO_0000073135" description="Ovomucoid">
    <location>
        <begin position="1" status="less than"/>
        <end position="56" status="greater than"/>
    </location>
</feature>
<feature type="domain" description="Kazal-like" evidence="1">
    <location>
        <begin position="6"/>
        <end position="56"/>
    </location>
</feature>
<feature type="site" description="Reactive bond 3">
    <location>
        <begin position="18"/>
        <end position="19"/>
    </location>
</feature>
<feature type="glycosylation site" description="N-linked (GlcNAc...) asparagine">
    <location>
        <position position="45"/>
    </location>
</feature>
<feature type="disulfide bond">
    <location>
        <begin position="8"/>
        <end position="38"/>
    </location>
</feature>
<feature type="disulfide bond">
    <location>
        <begin position="16"/>
        <end position="35"/>
    </location>
</feature>
<feature type="disulfide bond">
    <location>
        <begin position="24"/>
        <end position="56"/>
    </location>
</feature>
<feature type="non-terminal residue">
    <location>
        <position position="1"/>
    </location>
</feature>
<feature type="non-terminal residue">
    <location>
        <position position="56"/>
    </location>
</feature>
<protein>
    <recommendedName>
        <fullName>Ovomucoid</fullName>
    </recommendedName>
</protein>
<sequence>LAAVSVDCSEYPKPACTMEYRPLCGSDNKSYDNKCNFCNAVVESNGTLTLSHFGKC</sequence>
<keyword id="KW-0903">Direct protein sequencing</keyword>
<keyword id="KW-1015">Disulfide bond</keyword>
<keyword id="KW-0325">Glycoprotein</keyword>
<keyword id="KW-0646">Protease inhibitor</keyword>
<keyword id="KW-0677">Repeat</keyword>
<keyword id="KW-0964">Secreted</keyword>
<keyword id="KW-0722">Serine protease inhibitor</keyword>
<dbReference type="PIR" id="I31437">
    <property type="entry name" value="I31437"/>
</dbReference>
<dbReference type="SMR" id="P67894"/>
<dbReference type="GO" id="GO:0005615">
    <property type="term" value="C:extracellular space"/>
    <property type="evidence" value="ECO:0007669"/>
    <property type="project" value="UniProtKB-ARBA"/>
</dbReference>
<dbReference type="GO" id="GO:0004867">
    <property type="term" value="F:serine-type endopeptidase inhibitor activity"/>
    <property type="evidence" value="ECO:0007669"/>
    <property type="project" value="UniProtKB-KW"/>
</dbReference>
<dbReference type="CDD" id="cd00104">
    <property type="entry name" value="KAZAL_FS"/>
    <property type="match status" value="1"/>
</dbReference>
<dbReference type="FunFam" id="3.30.60.30:FF:000037">
    <property type="entry name" value="Ovomucoid"/>
    <property type="match status" value="1"/>
</dbReference>
<dbReference type="Gene3D" id="3.30.60.30">
    <property type="match status" value="1"/>
</dbReference>
<dbReference type="InterPro" id="IPR051597">
    <property type="entry name" value="Bifunctional_prot_inhibitor"/>
</dbReference>
<dbReference type="InterPro" id="IPR002350">
    <property type="entry name" value="Kazal_dom"/>
</dbReference>
<dbReference type="InterPro" id="IPR036058">
    <property type="entry name" value="Kazal_dom_sf"/>
</dbReference>
<dbReference type="InterPro" id="IPR001239">
    <property type="entry name" value="Prot_inh_Kazal-m"/>
</dbReference>
<dbReference type="PANTHER" id="PTHR47729:SF1">
    <property type="entry name" value="OVOMUCOID-LIKE-RELATED"/>
    <property type="match status" value="1"/>
</dbReference>
<dbReference type="PANTHER" id="PTHR47729">
    <property type="entry name" value="SERINE PEPTIDASE INHIBITOR, KAZAL TYPE 2, TANDEM DUPLICATE 1-RELATED"/>
    <property type="match status" value="1"/>
</dbReference>
<dbReference type="Pfam" id="PF00050">
    <property type="entry name" value="Kazal_1"/>
    <property type="match status" value="1"/>
</dbReference>
<dbReference type="PRINTS" id="PR00290">
    <property type="entry name" value="KAZALINHBTR"/>
</dbReference>
<dbReference type="SMART" id="SM00280">
    <property type="entry name" value="KAZAL"/>
    <property type="match status" value="1"/>
</dbReference>
<dbReference type="SUPFAM" id="SSF100895">
    <property type="entry name" value="Kazal-type serine protease inhibitors"/>
    <property type="match status" value="1"/>
</dbReference>
<dbReference type="PROSITE" id="PS00282">
    <property type="entry name" value="KAZAL_1"/>
    <property type="match status" value="1"/>
</dbReference>
<dbReference type="PROSITE" id="PS51465">
    <property type="entry name" value="KAZAL_2"/>
    <property type="match status" value="1"/>
</dbReference>
<organism>
    <name type="scientific">Lophura ignita</name>
    <name type="common">Bornean crested fireback pheasant</name>
    <name type="synonym">Phasianus ignitus</name>
    <dbReference type="NCBI Taxonomy" id="9044"/>
    <lineage>
        <taxon>Eukaryota</taxon>
        <taxon>Metazoa</taxon>
        <taxon>Chordata</taxon>
        <taxon>Craniata</taxon>
        <taxon>Vertebrata</taxon>
        <taxon>Euteleostomi</taxon>
        <taxon>Archelosauria</taxon>
        <taxon>Archosauria</taxon>
        <taxon>Dinosauria</taxon>
        <taxon>Saurischia</taxon>
        <taxon>Theropoda</taxon>
        <taxon>Coelurosauria</taxon>
        <taxon>Aves</taxon>
        <taxon>Neognathae</taxon>
        <taxon>Galloanserae</taxon>
        <taxon>Galliformes</taxon>
        <taxon>Phasianidae</taxon>
        <taxon>Phasianinae</taxon>
        <taxon>Lophura</taxon>
    </lineage>
</organism>
<accession>P67894</accession>
<accession>P05602</accession>
<reference key="1">
    <citation type="journal article" date="1987" name="Biochemistry">
        <title>Ovomucoid third domains from 100 avian species: isolation, sequences, and hypervariability of enzyme-inhibitor contact residues.</title>
        <authorList>
            <person name="Laskowski M. Jr."/>
            <person name="Kato I."/>
            <person name="Ardelt W."/>
            <person name="Cook J."/>
            <person name="Denton A."/>
            <person name="Empie M.W."/>
            <person name="Kohr W.J."/>
            <person name="Park S.J."/>
            <person name="Parks K."/>
            <person name="Schatzley B.L."/>
            <person name="Schoenberger O.L."/>
            <person name="Tashiro M."/>
            <person name="Vichot G."/>
            <person name="Whatley H.E."/>
            <person name="Wieczorek A."/>
            <person name="Wieczorek M."/>
        </authorList>
    </citation>
    <scope>PROTEIN SEQUENCE</scope>
</reference>
<proteinExistence type="evidence at protein level"/>
<name>IOVO_LOPIG</name>